<comment type="function">
    <text evidence="1">Catalyzes the attachment of valine to tRNA(Val). As ValRS can inadvertently accommodate and process structurally similar amino acids such as threonine, to avoid such errors, it has a 'posttransfer' editing activity that hydrolyzes mischarged Thr-tRNA(Val) in a tRNA-dependent manner.</text>
</comment>
<comment type="catalytic activity">
    <reaction evidence="1">
        <text>tRNA(Val) + L-valine + ATP = L-valyl-tRNA(Val) + AMP + diphosphate</text>
        <dbReference type="Rhea" id="RHEA:10704"/>
        <dbReference type="Rhea" id="RHEA-COMP:9672"/>
        <dbReference type="Rhea" id="RHEA-COMP:9708"/>
        <dbReference type="ChEBI" id="CHEBI:30616"/>
        <dbReference type="ChEBI" id="CHEBI:33019"/>
        <dbReference type="ChEBI" id="CHEBI:57762"/>
        <dbReference type="ChEBI" id="CHEBI:78442"/>
        <dbReference type="ChEBI" id="CHEBI:78537"/>
        <dbReference type="ChEBI" id="CHEBI:456215"/>
        <dbReference type="EC" id="6.1.1.9"/>
    </reaction>
</comment>
<comment type="subunit">
    <text evidence="1">Monomer.</text>
</comment>
<comment type="subcellular location">
    <subcellularLocation>
        <location evidence="1">Cytoplasm</location>
    </subcellularLocation>
</comment>
<comment type="domain">
    <text evidence="1">ValRS has two distinct active sites: one for aminoacylation and one for editing. The misactivated threonine is translocated from the active site to the editing site.</text>
</comment>
<comment type="domain">
    <text evidence="1">The C-terminal coiled-coil domain is crucial for aminoacylation activity.</text>
</comment>
<comment type="similarity">
    <text evidence="1">Belongs to the class-I aminoacyl-tRNA synthetase family. ValS type 1 subfamily.</text>
</comment>
<reference key="1">
    <citation type="journal article" date="1999" name="Nature">
        <title>Genomic sequence comparison of two unrelated isolates of the human gastric pathogen Helicobacter pylori.</title>
        <authorList>
            <person name="Alm R.A."/>
            <person name="Ling L.-S.L."/>
            <person name="Moir D.T."/>
            <person name="King B.L."/>
            <person name="Brown E.D."/>
            <person name="Doig P.C."/>
            <person name="Smith D.R."/>
            <person name="Noonan B."/>
            <person name="Guild B.C."/>
            <person name="deJonge B.L."/>
            <person name="Carmel G."/>
            <person name="Tummino P.J."/>
            <person name="Caruso A."/>
            <person name="Uria-Nickelsen M."/>
            <person name="Mills D.M."/>
            <person name="Ives C."/>
            <person name="Gibson R."/>
            <person name="Merberg D."/>
            <person name="Mills S.D."/>
            <person name="Jiang Q."/>
            <person name="Taylor D.E."/>
            <person name="Vovis G.F."/>
            <person name="Trust T.J."/>
        </authorList>
    </citation>
    <scope>NUCLEOTIDE SEQUENCE [LARGE SCALE GENOMIC DNA]</scope>
    <source>
        <strain>J99 / ATCC 700824</strain>
    </source>
</reference>
<keyword id="KW-0030">Aminoacyl-tRNA synthetase</keyword>
<keyword id="KW-0067">ATP-binding</keyword>
<keyword id="KW-0175">Coiled coil</keyword>
<keyword id="KW-0963">Cytoplasm</keyword>
<keyword id="KW-0436">Ligase</keyword>
<keyword id="KW-0547">Nucleotide-binding</keyword>
<keyword id="KW-0648">Protein biosynthesis</keyword>
<accession>Q9ZK61</accession>
<protein>
    <recommendedName>
        <fullName evidence="1">Valine--tRNA ligase</fullName>
        <ecNumber evidence="1">6.1.1.9</ecNumber>
    </recommendedName>
    <alternativeName>
        <fullName evidence="1">Valyl-tRNA synthetase</fullName>
        <shortName evidence="1">ValRS</shortName>
    </alternativeName>
</protein>
<name>SYV_HELPJ</name>
<evidence type="ECO:0000255" key="1">
    <source>
        <dbReference type="HAMAP-Rule" id="MF_02004"/>
    </source>
</evidence>
<proteinExistence type="inferred from homology"/>
<organism>
    <name type="scientific">Helicobacter pylori (strain J99 / ATCC 700824)</name>
    <name type="common">Campylobacter pylori J99</name>
    <dbReference type="NCBI Taxonomy" id="85963"/>
    <lineage>
        <taxon>Bacteria</taxon>
        <taxon>Pseudomonadati</taxon>
        <taxon>Campylobacterota</taxon>
        <taxon>Epsilonproteobacteria</taxon>
        <taxon>Campylobacterales</taxon>
        <taxon>Helicobacteraceae</taxon>
        <taxon>Helicobacter</taxon>
    </lineage>
</organism>
<sequence>MKQEPTTYQPEEIEKKIYEICSHRGYFEINGNEKIQEKGKRFCLMMPPPNVTGILHIGHALTLSLQDILVRYKRMDGYKTLYQPGLDHAGIATQNVVEKQLLSQGVKKEDLGREKFIQKVWEWKEKSGGAILEQMKRLGVSTAFSRTRFTMDKGLQRAVKLAFLKWYEKGLIVQDNYMVNWCTKDGALSDIEVEYEERKGALYYIRYYLENQKDYLVVATTRPETLFGDSAIMVNPNDERYKHLVGQQVILPLINRTIPIIADAHVEMGFGTGCVKVTPGHDFNDYEVGKRHHLETIKIFDEKGILNAHCGEFENLERLEARDKVVAALKENALLEKIEEHVHQVGHCYRCHNVVEPYVSKQWFVKPEIAQSSIEKIQQGLARFYPSNWINNYNAWMRELRPWCISRQLFWGHQIPVFTCENNHQFVSLDTPLSCPTCKSEKLEQDKDVLDTWFSSGLWAFSTLGWGQEKSDLFNESDLKDFYPNTTLITGFDILFFWVARMLFCSESLLGELPFKDIYLHALVRDEKGEKMSKSKGNVIDPLEMIEKYGADSLRFTLANLCATGRDIKLSTTHLENNKNFANKLFNAASYLKLKQESFKDKERLNEYQTALGRYAKSRLNLVTKEVRNALDNYRFNDATTLLYRFLWGEFCDWFIEFSKVENEAIDELGSVLKEALKLLHPFMPFISESLYHKLSNTELENAHSIMVMPYPKEIAQDEKLEHEFEVIKDCIVSLRRLKIMLETPPIVLKEASVGLREKIENTERLQNYAQKLAKLEKVSVITYKPLKSVSDVGEFCQTYADLENLDLSPLIARLKKQLEKLEKEKLKLNLHNENFVKNAPKSVLEKARESLKTLLEKEGKIQQELDLLEQP</sequence>
<feature type="chain" id="PRO_0000106228" description="Valine--tRNA ligase">
    <location>
        <begin position="1"/>
        <end position="872"/>
    </location>
</feature>
<feature type="coiled-coil region" evidence="1">
    <location>
        <begin position="810"/>
        <end position="871"/>
    </location>
</feature>
<feature type="short sequence motif" description="'HIGH' region">
    <location>
        <begin position="49"/>
        <end position="59"/>
    </location>
</feature>
<feature type="short sequence motif" description="'KMSKS' region">
    <location>
        <begin position="531"/>
        <end position="535"/>
    </location>
</feature>
<feature type="binding site" evidence="1">
    <location>
        <position position="534"/>
    </location>
    <ligand>
        <name>ATP</name>
        <dbReference type="ChEBI" id="CHEBI:30616"/>
    </ligand>
</feature>
<gene>
    <name evidence="1" type="primary">valS</name>
    <name type="ordered locus">jhp_1080</name>
</gene>
<dbReference type="EC" id="6.1.1.9" evidence="1"/>
<dbReference type="EMBL" id="AE001439">
    <property type="protein sequence ID" value="AAD06660.1"/>
    <property type="molecule type" value="Genomic_DNA"/>
</dbReference>
<dbReference type="PIR" id="E71852">
    <property type="entry name" value="E71852"/>
</dbReference>
<dbReference type="RefSeq" id="WP_000807100.1">
    <property type="nucleotide sequence ID" value="NC_000921.1"/>
</dbReference>
<dbReference type="SMR" id="Q9ZK61"/>
<dbReference type="KEGG" id="hpj:jhp_1080"/>
<dbReference type="PATRIC" id="fig|85963.30.peg.1503"/>
<dbReference type="eggNOG" id="COG0525">
    <property type="taxonomic scope" value="Bacteria"/>
</dbReference>
<dbReference type="Proteomes" id="UP000000804">
    <property type="component" value="Chromosome"/>
</dbReference>
<dbReference type="GO" id="GO:0005829">
    <property type="term" value="C:cytosol"/>
    <property type="evidence" value="ECO:0007669"/>
    <property type="project" value="TreeGrafter"/>
</dbReference>
<dbReference type="GO" id="GO:0002161">
    <property type="term" value="F:aminoacyl-tRNA deacylase activity"/>
    <property type="evidence" value="ECO:0007669"/>
    <property type="project" value="InterPro"/>
</dbReference>
<dbReference type="GO" id="GO:0005524">
    <property type="term" value="F:ATP binding"/>
    <property type="evidence" value="ECO:0007669"/>
    <property type="project" value="UniProtKB-UniRule"/>
</dbReference>
<dbReference type="GO" id="GO:0004832">
    <property type="term" value="F:valine-tRNA ligase activity"/>
    <property type="evidence" value="ECO:0007669"/>
    <property type="project" value="UniProtKB-UniRule"/>
</dbReference>
<dbReference type="GO" id="GO:0006438">
    <property type="term" value="P:valyl-tRNA aminoacylation"/>
    <property type="evidence" value="ECO:0007669"/>
    <property type="project" value="UniProtKB-UniRule"/>
</dbReference>
<dbReference type="CDD" id="cd07962">
    <property type="entry name" value="Anticodon_Ia_Val"/>
    <property type="match status" value="1"/>
</dbReference>
<dbReference type="CDD" id="cd00817">
    <property type="entry name" value="ValRS_core"/>
    <property type="match status" value="1"/>
</dbReference>
<dbReference type="FunFam" id="3.40.50.620:FF:000219">
    <property type="entry name" value="Valine--tRNA ligase"/>
    <property type="match status" value="1"/>
</dbReference>
<dbReference type="FunFam" id="3.40.50.620:FF:000382">
    <property type="entry name" value="Valine--tRNA ligase"/>
    <property type="match status" value="1"/>
</dbReference>
<dbReference type="FunFam" id="3.90.740.10:FF:000005">
    <property type="entry name" value="Valine--tRNA ligase, mitochondrial"/>
    <property type="match status" value="1"/>
</dbReference>
<dbReference type="Gene3D" id="2.170.220.10">
    <property type="match status" value="1"/>
</dbReference>
<dbReference type="Gene3D" id="3.40.50.620">
    <property type="entry name" value="HUPs"/>
    <property type="match status" value="2"/>
</dbReference>
<dbReference type="Gene3D" id="1.10.730.10">
    <property type="entry name" value="Isoleucyl-tRNA Synthetase, Domain 1"/>
    <property type="match status" value="1"/>
</dbReference>
<dbReference type="Gene3D" id="1.10.287.380">
    <property type="entry name" value="Valyl-tRNA synthetase, C-terminal domain"/>
    <property type="match status" value="1"/>
</dbReference>
<dbReference type="Gene3D" id="3.90.740.10">
    <property type="entry name" value="Valyl/Leucyl/Isoleucyl-tRNA synthetase, editing domain"/>
    <property type="match status" value="1"/>
</dbReference>
<dbReference type="HAMAP" id="MF_02004">
    <property type="entry name" value="Val_tRNA_synth_type1"/>
    <property type="match status" value="1"/>
</dbReference>
<dbReference type="InterPro" id="IPR001412">
    <property type="entry name" value="aa-tRNA-synth_I_CS"/>
</dbReference>
<dbReference type="InterPro" id="IPR002300">
    <property type="entry name" value="aa-tRNA-synth_Ia"/>
</dbReference>
<dbReference type="InterPro" id="IPR033705">
    <property type="entry name" value="Anticodon_Ia_Val"/>
</dbReference>
<dbReference type="InterPro" id="IPR013155">
    <property type="entry name" value="M/V/L/I-tRNA-synth_anticd-bd"/>
</dbReference>
<dbReference type="InterPro" id="IPR014729">
    <property type="entry name" value="Rossmann-like_a/b/a_fold"/>
</dbReference>
<dbReference type="InterPro" id="IPR010978">
    <property type="entry name" value="tRNA-bd_arm"/>
</dbReference>
<dbReference type="InterPro" id="IPR009080">
    <property type="entry name" value="tRNAsynth_Ia_anticodon-bd"/>
</dbReference>
<dbReference type="InterPro" id="IPR037118">
    <property type="entry name" value="Val-tRNA_synth_C_sf"/>
</dbReference>
<dbReference type="InterPro" id="IPR019499">
    <property type="entry name" value="Val-tRNA_synth_tRNA-bd"/>
</dbReference>
<dbReference type="InterPro" id="IPR009008">
    <property type="entry name" value="Val/Leu/Ile-tRNA-synth_edit"/>
</dbReference>
<dbReference type="InterPro" id="IPR002303">
    <property type="entry name" value="Valyl-tRNA_ligase"/>
</dbReference>
<dbReference type="NCBIfam" id="NF004349">
    <property type="entry name" value="PRK05729.1"/>
    <property type="match status" value="1"/>
</dbReference>
<dbReference type="NCBIfam" id="TIGR00422">
    <property type="entry name" value="valS"/>
    <property type="match status" value="1"/>
</dbReference>
<dbReference type="PANTHER" id="PTHR11946:SF93">
    <property type="entry name" value="VALINE--TRNA LIGASE, CHLOROPLASTIC_MITOCHONDRIAL 2"/>
    <property type="match status" value="1"/>
</dbReference>
<dbReference type="PANTHER" id="PTHR11946">
    <property type="entry name" value="VALYL-TRNA SYNTHETASES"/>
    <property type="match status" value="1"/>
</dbReference>
<dbReference type="Pfam" id="PF08264">
    <property type="entry name" value="Anticodon_1"/>
    <property type="match status" value="1"/>
</dbReference>
<dbReference type="Pfam" id="PF00133">
    <property type="entry name" value="tRNA-synt_1"/>
    <property type="match status" value="1"/>
</dbReference>
<dbReference type="Pfam" id="PF10458">
    <property type="entry name" value="Val_tRNA-synt_C"/>
    <property type="match status" value="1"/>
</dbReference>
<dbReference type="PRINTS" id="PR00986">
    <property type="entry name" value="TRNASYNTHVAL"/>
</dbReference>
<dbReference type="SUPFAM" id="SSF47323">
    <property type="entry name" value="Anticodon-binding domain of a subclass of class I aminoacyl-tRNA synthetases"/>
    <property type="match status" value="1"/>
</dbReference>
<dbReference type="SUPFAM" id="SSF52374">
    <property type="entry name" value="Nucleotidylyl transferase"/>
    <property type="match status" value="1"/>
</dbReference>
<dbReference type="SUPFAM" id="SSF46589">
    <property type="entry name" value="tRNA-binding arm"/>
    <property type="match status" value="1"/>
</dbReference>
<dbReference type="SUPFAM" id="SSF50677">
    <property type="entry name" value="ValRS/IleRS/LeuRS editing domain"/>
    <property type="match status" value="1"/>
</dbReference>
<dbReference type="PROSITE" id="PS00178">
    <property type="entry name" value="AA_TRNA_LIGASE_I"/>
    <property type="match status" value="1"/>
</dbReference>